<comment type="function">
    <text evidence="1">Component of the srb8-11 complex. The srb8-11 complex is a regulatory module of the Mediator complex which is itself involved in regulation of basal and activated RNA polymerase II-dependent transcription. The srb8-11 complex may be involved in the transcriptional repression of a subset of genes regulated by Mediator. It may inhibit the association of the Mediator complex with RNA polymerase II to form the holoenzyme complex (By similarity).</text>
</comment>
<comment type="subunit">
    <text evidence="1">Component of the srb8-11 complex, which itself associates with the Mediator complex.</text>
</comment>
<comment type="subcellular location">
    <subcellularLocation>
        <location evidence="3">Nucleus</location>
    </subcellularLocation>
</comment>
<comment type="similarity">
    <text evidence="3">Belongs to the Mediator complex subunit 12 family.</text>
</comment>
<sequence>MIPHSSAGVQSWGQPLYAVYTGTGRADLSQPLGQPDRQSEQPSMPVAQTQGRPPALIDLTANDGDVLEREPPAKRLKIDVHAGSVANDGSPASAGVGESKSTPGATTSKPPSLSWRARPVWSFQSLLSEIPGSAEINGESAAGVVQDLKPPPPPSFSGPPWKFAPTDIIASDSAGEQDGASAKEVQTTPYHIETPSVAPVIRGEKVADFSPWMGNHPEDVLNEQTAKQGYYDRTQVSQNESNTARPSLYAQLKHRSGLQILSSVFAAALEKRQGHNMVTAPSTFKPPPRVTLTDNKREAWLRDLANPNVPLRKLSRTIPHGIRGRVLLDQCLTKWVPVGRAVWLAKCVGANEIRAFKRKGTSGALTIGLEAKWVRDWTANVQQFLEGVITSCGVADWKMKVTYAVNLTSRLFFEQLLDHDQYLEWFLTSLEAAPFNTLPVWLLMLGIYWSNILRYRKRGRRLAELLLDKLQLAIKSDSAPSLRPLIDRLSLHIRKLTLEHTSSMVLPQSWEKYKDLLSSCLNLNDNVHRTVFQILAERNARVQKPPKCEGTTQQPPQQRVIQLFDSICSSHDITSVSAASLRAIDDKAALVLKLLEWAATPFRYGVSRVYTGARLLRKWKIAGVDVDTCIISFLGESQMSDQLNMDNVYHIVSELVRSQTFSVGKYLQWLMAKGVADFSRSSDHQPLSGDLALLVQLPVSRLPEHVHNLRNTLLHRAGVEPSKEASTIAILKASIAERLPRIFGSVATSAVSCDPLPSDLTWTVKSELGQWIRRGVTEFGRDPRRAFQGLHSTTSAEHFALTPGEFYTVRDILESFGDLSILADVLKQATVCNDGIVLASAADTVNYHFRSFCVIGATTDLFKRLVEAYARLKRLGSTSLDLIFSLIDLGLRLPGELNTVALLRQDLSRIESKSSMAAPSPLSDHIPSSFNENDPLFLLKLDQLLSSASGIDESTLDTIFNVLIKQLESSGGHAKFSVNEICRYLSYLRPFHPKRFDTMIVRWVCGLLRSSTGGILSQVLPPLIGVGCVTIQAFVFLVRRLLKSDNKISNQRDLRIDLLQLLVPPPAGQSRYFDLVTYRFHLSRKEFLFKHPEEAFDIIRDAIALIDSESQEGNYRQVDLGHSAMVLLQILLTKNPESAVRHCSEKLIGQHPSAVTVLTRALDSLLGLDSKAGGHLFTSNDTFIFIPIDTGPATPDISVAEKVIELTNDFSLPFCQLKLQLLFNAESKGNVRNEIVDVMFKAAVADSRSRRSNWVGLVSLMSHDAVRQVKCHDIRERAEKNFFATPLFEESPDGCSSFAADNSSSLEAAKLYLAIIEKLAYSIPDVGPQAVVPVLTEKLDLLLQRLISMQASCSGTTELSHGVDAEQMIRSRTQFERALAFWFSALLRMIVLHRTAFSVPSAAVRPNALPEQTRLLISIFCISLARLPDSVLRLFPAADYFPHSMRAADCRPCPGILLQTHALDVAASLIDMFPDEARHQCARYLREKCPPFARVQNDSRFLYLLGPLGDSPSSNITLPVSIPSPAASGSTPAPTPSGNSTGGFSHPQQPAFVSGVPPGLPDGLNCAASHLCLQYRGRVIGAYPVRPWELLEDAAPIAGTNDTAVSLGYFDARRVRV</sequence>
<evidence type="ECO:0000250" key="1"/>
<evidence type="ECO:0000256" key="2">
    <source>
        <dbReference type="SAM" id="MobiDB-lite"/>
    </source>
</evidence>
<evidence type="ECO:0000305" key="3"/>
<name>SRB8_ASPFU</name>
<reference key="1">
    <citation type="journal article" date="2005" name="Nature">
        <title>Genomic sequence of the pathogenic and allergenic filamentous fungus Aspergillus fumigatus.</title>
        <authorList>
            <person name="Nierman W.C."/>
            <person name="Pain A."/>
            <person name="Anderson M.J."/>
            <person name="Wortman J.R."/>
            <person name="Kim H.S."/>
            <person name="Arroyo J."/>
            <person name="Berriman M."/>
            <person name="Abe K."/>
            <person name="Archer D.B."/>
            <person name="Bermejo C."/>
            <person name="Bennett J.W."/>
            <person name="Bowyer P."/>
            <person name="Chen D."/>
            <person name="Collins M."/>
            <person name="Coulsen R."/>
            <person name="Davies R."/>
            <person name="Dyer P.S."/>
            <person name="Farman M.L."/>
            <person name="Fedorova N."/>
            <person name="Fedorova N.D."/>
            <person name="Feldblyum T.V."/>
            <person name="Fischer R."/>
            <person name="Fosker N."/>
            <person name="Fraser A."/>
            <person name="Garcia J.L."/>
            <person name="Garcia M.J."/>
            <person name="Goble A."/>
            <person name="Goldman G.H."/>
            <person name="Gomi K."/>
            <person name="Griffith-Jones S."/>
            <person name="Gwilliam R."/>
            <person name="Haas B.J."/>
            <person name="Haas H."/>
            <person name="Harris D.E."/>
            <person name="Horiuchi H."/>
            <person name="Huang J."/>
            <person name="Humphray S."/>
            <person name="Jimenez J."/>
            <person name="Keller N."/>
            <person name="Khouri H."/>
            <person name="Kitamoto K."/>
            <person name="Kobayashi T."/>
            <person name="Konzack S."/>
            <person name="Kulkarni R."/>
            <person name="Kumagai T."/>
            <person name="Lafton A."/>
            <person name="Latge J.-P."/>
            <person name="Li W."/>
            <person name="Lord A."/>
            <person name="Lu C."/>
            <person name="Majoros W.H."/>
            <person name="May G.S."/>
            <person name="Miller B.L."/>
            <person name="Mohamoud Y."/>
            <person name="Molina M."/>
            <person name="Monod M."/>
            <person name="Mouyna I."/>
            <person name="Mulligan S."/>
            <person name="Murphy L.D."/>
            <person name="O'Neil S."/>
            <person name="Paulsen I."/>
            <person name="Penalva M.A."/>
            <person name="Pertea M."/>
            <person name="Price C."/>
            <person name="Pritchard B.L."/>
            <person name="Quail M.A."/>
            <person name="Rabbinowitsch E."/>
            <person name="Rawlins N."/>
            <person name="Rajandream M.A."/>
            <person name="Reichard U."/>
            <person name="Renauld H."/>
            <person name="Robson G.D."/>
            <person name="Rodriguez de Cordoba S."/>
            <person name="Rodriguez-Pena J.M."/>
            <person name="Ronning C.M."/>
            <person name="Rutter S."/>
            <person name="Salzberg S.L."/>
            <person name="Sanchez M."/>
            <person name="Sanchez-Ferrero J.C."/>
            <person name="Saunders D."/>
            <person name="Seeger K."/>
            <person name="Squares R."/>
            <person name="Squares S."/>
            <person name="Takeuchi M."/>
            <person name="Tekaia F."/>
            <person name="Turner G."/>
            <person name="Vazquez de Aldana C.R."/>
            <person name="Weidman J."/>
            <person name="White O."/>
            <person name="Woodward J.R."/>
            <person name="Yu J.-H."/>
            <person name="Fraser C.M."/>
            <person name="Galagan J.E."/>
            <person name="Asai K."/>
            <person name="Machida M."/>
            <person name="Hall N."/>
            <person name="Barrell B.G."/>
            <person name="Denning D.W."/>
        </authorList>
    </citation>
    <scope>NUCLEOTIDE SEQUENCE [LARGE SCALE GENOMIC DNA]</scope>
    <source>
        <strain>ATCC MYA-4609 / CBS 101355 / FGSC A1100 / Af293</strain>
    </source>
</reference>
<protein>
    <recommendedName>
        <fullName>Mediator of RNA polymerase II transcription subunit 12</fullName>
    </recommendedName>
    <alternativeName>
        <fullName>Mediator complex subunit 12</fullName>
    </alternativeName>
</protein>
<feature type="chain" id="PRO_0000312966" description="Mediator of RNA polymerase II transcription subunit 12">
    <location>
        <begin position="1"/>
        <end position="1617"/>
    </location>
</feature>
<feature type="region of interest" description="Disordered" evidence="2">
    <location>
        <begin position="25"/>
        <end position="114"/>
    </location>
</feature>
<feature type="region of interest" description="Disordered" evidence="2">
    <location>
        <begin position="1519"/>
        <end position="1552"/>
    </location>
</feature>
<feature type="compositionally biased region" description="Polar residues" evidence="2">
    <location>
        <begin position="40"/>
        <end position="51"/>
    </location>
</feature>
<feature type="compositionally biased region" description="Basic and acidic residues" evidence="2">
    <location>
        <begin position="66"/>
        <end position="80"/>
    </location>
</feature>
<feature type="compositionally biased region" description="Polar residues" evidence="2">
    <location>
        <begin position="99"/>
        <end position="111"/>
    </location>
</feature>
<feature type="compositionally biased region" description="Low complexity" evidence="2">
    <location>
        <begin position="1523"/>
        <end position="1543"/>
    </location>
</feature>
<proteinExistence type="inferred from homology"/>
<accession>Q4WWL0</accession>
<organism>
    <name type="scientific">Aspergillus fumigatus (strain ATCC MYA-4609 / CBS 101355 / FGSC A1100 / Af293)</name>
    <name type="common">Neosartorya fumigata</name>
    <dbReference type="NCBI Taxonomy" id="330879"/>
    <lineage>
        <taxon>Eukaryota</taxon>
        <taxon>Fungi</taxon>
        <taxon>Dikarya</taxon>
        <taxon>Ascomycota</taxon>
        <taxon>Pezizomycotina</taxon>
        <taxon>Eurotiomycetes</taxon>
        <taxon>Eurotiomycetidae</taxon>
        <taxon>Eurotiales</taxon>
        <taxon>Aspergillaceae</taxon>
        <taxon>Aspergillus</taxon>
        <taxon>Aspergillus subgen. Fumigati</taxon>
    </lineage>
</organism>
<keyword id="KW-0010">Activator</keyword>
<keyword id="KW-0539">Nucleus</keyword>
<keyword id="KW-1185">Reference proteome</keyword>
<keyword id="KW-0678">Repressor</keyword>
<keyword id="KW-0804">Transcription</keyword>
<keyword id="KW-0805">Transcription regulation</keyword>
<gene>
    <name type="primary">srb8</name>
    <name type="synonym">med12</name>
    <name type="ORF">AFUA_3G06250</name>
</gene>
<dbReference type="EMBL" id="AAHF01000002">
    <property type="protein sequence ID" value="EAL92943.2"/>
    <property type="molecule type" value="Genomic_DNA"/>
</dbReference>
<dbReference type="RefSeq" id="XP_754981.2">
    <property type="nucleotide sequence ID" value="XM_749888.2"/>
</dbReference>
<dbReference type="SMR" id="Q4WWL0"/>
<dbReference type="STRING" id="330879.Q4WWL0"/>
<dbReference type="EnsemblFungi" id="EAL92943">
    <property type="protein sequence ID" value="EAL92943"/>
    <property type="gene ID" value="AFUA_3G06250"/>
</dbReference>
<dbReference type="GeneID" id="3511712"/>
<dbReference type="KEGG" id="afm:AFUA_3G06250"/>
<dbReference type="eggNOG" id="KOG4522">
    <property type="taxonomic scope" value="Eukaryota"/>
</dbReference>
<dbReference type="HOGENOM" id="CLU_002034_1_0_1"/>
<dbReference type="InParanoid" id="Q4WWL0"/>
<dbReference type="OMA" id="YPVRPWE"/>
<dbReference type="OrthoDB" id="20828at2759"/>
<dbReference type="Proteomes" id="UP000002530">
    <property type="component" value="Chromosome 3"/>
</dbReference>
<dbReference type="GO" id="GO:0016592">
    <property type="term" value="C:mediator complex"/>
    <property type="evidence" value="ECO:0007669"/>
    <property type="project" value="InterPro"/>
</dbReference>
<dbReference type="GO" id="GO:0003712">
    <property type="term" value="F:transcription coregulator activity"/>
    <property type="evidence" value="ECO:0007669"/>
    <property type="project" value="InterPro"/>
</dbReference>
<dbReference type="GO" id="GO:0006357">
    <property type="term" value="P:regulation of transcription by RNA polymerase II"/>
    <property type="evidence" value="ECO:0007669"/>
    <property type="project" value="InterPro"/>
</dbReference>
<dbReference type="InterPro" id="IPR019035">
    <property type="entry name" value="Mediator_Med12"/>
</dbReference>
<dbReference type="PANTHER" id="PTHR46567">
    <property type="entry name" value="MEDIATOR OF RNA POLYMERASE II TRANSCRIPTION SUBUNIT 12"/>
    <property type="match status" value="1"/>
</dbReference>
<dbReference type="PANTHER" id="PTHR46567:SF1">
    <property type="entry name" value="MEDIATOR OF RNA POLYMERASE II TRANSCRIPTION SUBUNIT 12"/>
    <property type="match status" value="1"/>
</dbReference>
<dbReference type="Pfam" id="PF25326">
    <property type="entry name" value="ARM_SRB8"/>
    <property type="match status" value="1"/>
</dbReference>
<dbReference type="Pfam" id="PF09497">
    <property type="entry name" value="Med12"/>
    <property type="match status" value="1"/>
</dbReference>
<dbReference type="SMART" id="SM01281">
    <property type="entry name" value="Med12"/>
    <property type="match status" value="1"/>
</dbReference>